<accession>Q8XCT6</accession>
<accession>Q7AGU0</accession>
<protein>
    <recommendedName>
        <fullName evidence="2">Bifunctional protein FolD</fullName>
    </recommendedName>
    <domain>
        <recommendedName>
            <fullName evidence="2">Methylenetetrahydrofolate dehydrogenase</fullName>
            <ecNumber evidence="2">1.5.1.5</ecNumber>
        </recommendedName>
    </domain>
    <domain>
        <recommendedName>
            <fullName evidence="2">Methenyltetrahydrofolate cyclohydrolase</fullName>
            <ecNumber evidence="2">3.5.4.9</ecNumber>
        </recommendedName>
    </domain>
</protein>
<name>FOLD_ECO57</name>
<sequence>MAAKIIDGKTIAQQVRSEVAQKVQARIAAGLRAPGLAVVLVGSNPASQIYVASKRKACEEVGFVSRSYDLPETTSEAELLELIDALNADNTIDGILVQLPLPAGIDNVKVLERIHPDKDVDGFHPYNVGRLCQRAPRLRPCTPRGIVTLLERYNIDTFGLNAVVIGASNIVGRPMSMELLLAGCTTTVTHRFTKNLRHHVENADLLIVAVGKPGFIPGDWIKEGAIVIDVGINRLENGKVVGDVVFEDAAKRASYITPVPGGVGPMTVATLIENTLQACVEYHDPQGE</sequence>
<comment type="function">
    <text evidence="2">Catalyzes the oxidation of 5,10-methylenetetrahydrofolate to 5,10-methenyltetrahydrofolate and then the hydrolysis of 5,10-methenyltetrahydrofolate to 10-formyltetrahydrofolate.</text>
</comment>
<comment type="catalytic activity">
    <reaction evidence="2">
        <text>(6R)-5,10-methylene-5,6,7,8-tetrahydrofolate + NADP(+) = (6R)-5,10-methenyltetrahydrofolate + NADPH</text>
        <dbReference type="Rhea" id="RHEA:22812"/>
        <dbReference type="ChEBI" id="CHEBI:15636"/>
        <dbReference type="ChEBI" id="CHEBI:57455"/>
        <dbReference type="ChEBI" id="CHEBI:57783"/>
        <dbReference type="ChEBI" id="CHEBI:58349"/>
        <dbReference type="EC" id="1.5.1.5"/>
    </reaction>
</comment>
<comment type="catalytic activity">
    <reaction evidence="2">
        <text>(6R)-5,10-methenyltetrahydrofolate + H2O = (6R)-10-formyltetrahydrofolate + H(+)</text>
        <dbReference type="Rhea" id="RHEA:23700"/>
        <dbReference type="ChEBI" id="CHEBI:15377"/>
        <dbReference type="ChEBI" id="CHEBI:15378"/>
        <dbReference type="ChEBI" id="CHEBI:57455"/>
        <dbReference type="ChEBI" id="CHEBI:195366"/>
        <dbReference type="EC" id="3.5.4.9"/>
    </reaction>
</comment>
<comment type="pathway">
    <text evidence="2">One-carbon metabolism; tetrahydrofolate interconversion.</text>
</comment>
<comment type="subunit">
    <text evidence="2">Homodimer.</text>
</comment>
<comment type="similarity">
    <text evidence="2">Belongs to the tetrahydrofolate dehydrogenase/cyclohydrolase family.</text>
</comment>
<proteinExistence type="inferred from homology"/>
<gene>
    <name evidence="2" type="primary">folD</name>
    <name type="ordered locus">Z0684</name>
    <name type="ordered locus">ECs0591</name>
</gene>
<feature type="initiator methionine" description="Removed" evidence="1">
    <location>
        <position position="1"/>
    </location>
</feature>
<feature type="chain" id="PRO_0000268347" description="Bifunctional protein FolD">
    <location>
        <begin position="2"/>
        <end position="288"/>
    </location>
</feature>
<feature type="binding site" evidence="2">
    <location>
        <begin position="166"/>
        <end position="168"/>
    </location>
    <ligand>
        <name>NADP(+)</name>
        <dbReference type="ChEBI" id="CHEBI:58349"/>
    </ligand>
</feature>
<feature type="binding site" evidence="2">
    <location>
        <position position="232"/>
    </location>
    <ligand>
        <name>NADP(+)</name>
        <dbReference type="ChEBI" id="CHEBI:58349"/>
    </ligand>
</feature>
<keyword id="KW-0028">Amino-acid biosynthesis</keyword>
<keyword id="KW-0368">Histidine biosynthesis</keyword>
<keyword id="KW-0378">Hydrolase</keyword>
<keyword id="KW-0486">Methionine biosynthesis</keyword>
<keyword id="KW-0511">Multifunctional enzyme</keyword>
<keyword id="KW-0521">NADP</keyword>
<keyword id="KW-0554">One-carbon metabolism</keyword>
<keyword id="KW-0560">Oxidoreductase</keyword>
<keyword id="KW-0658">Purine biosynthesis</keyword>
<keyword id="KW-1185">Reference proteome</keyword>
<organism>
    <name type="scientific">Escherichia coli O157:H7</name>
    <dbReference type="NCBI Taxonomy" id="83334"/>
    <lineage>
        <taxon>Bacteria</taxon>
        <taxon>Pseudomonadati</taxon>
        <taxon>Pseudomonadota</taxon>
        <taxon>Gammaproteobacteria</taxon>
        <taxon>Enterobacterales</taxon>
        <taxon>Enterobacteriaceae</taxon>
        <taxon>Escherichia</taxon>
    </lineage>
</organism>
<reference key="1">
    <citation type="journal article" date="2001" name="Nature">
        <title>Genome sequence of enterohaemorrhagic Escherichia coli O157:H7.</title>
        <authorList>
            <person name="Perna N.T."/>
            <person name="Plunkett G. III"/>
            <person name="Burland V."/>
            <person name="Mau B."/>
            <person name="Glasner J.D."/>
            <person name="Rose D.J."/>
            <person name="Mayhew G.F."/>
            <person name="Evans P.S."/>
            <person name="Gregor J."/>
            <person name="Kirkpatrick H.A."/>
            <person name="Posfai G."/>
            <person name="Hackett J."/>
            <person name="Klink S."/>
            <person name="Boutin A."/>
            <person name="Shao Y."/>
            <person name="Miller L."/>
            <person name="Grotbeck E.J."/>
            <person name="Davis N.W."/>
            <person name="Lim A."/>
            <person name="Dimalanta E.T."/>
            <person name="Potamousis K."/>
            <person name="Apodaca J."/>
            <person name="Anantharaman T.S."/>
            <person name="Lin J."/>
            <person name="Yen G."/>
            <person name="Schwartz D.C."/>
            <person name="Welch R.A."/>
            <person name="Blattner F.R."/>
        </authorList>
    </citation>
    <scope>NUCLEOTIDE SEQUENCE [LARGE SCALE GENOMIC DNA]</scope>
    <source>
        <strain>O157:H7 / EDL933 / ATCC 700927 / EHEC</strain>
    </source>
</reference>
<reference key="2">
    <citation type="journal article" date="2001" name="DNA Res.">
        <title>Complete genome sequence of enterohemorrhagic Escherichia coli O157:H7 and genomic comparison with a laboratory strain K-12.</title>
        <authorList>
            <person name="Hayashi T."/>
            <person name="Makino K."/>
            <person name="Ohnishi M."/>
            <person name="Kurokawa K."/>
            <person name="Ishii K."/>
            <person name="Yokoyama K."/>
            <person name="Han C.-G."/>
            <person name="Ohtsubo E."/>
            <person name="Nakayama K."/>
            <person name="Murata T."/>
            <person name="Tanaka M."/>
            <person name="Tobe T."/>
            <person name="Iida T."/>
            <person name="Takami H."/>
            <person name="Honda T."/>
            <person name="Sasakawa C."/>
            <person name="Ogasawara N."/>
            <person name="Yasunaga T."/>
            <person name="Kuhara S."/>
            <person name="Shiba T."/>
            <person name="Hattori M."/>
            <person name="Shinagawa H."/>
        </authorList>
    </citation>
    <scope>NUCLEOTIDE SEQUENCE [LARGE SCALE GENOMIC DNA]</scope>
    <source>
        <strain>O157:H7 / Sakai / RIMD 0509952 / EHEC</strain>
    </source>
</reference>
<dbReference type="EC" id="1.5.1.5" evidence="2"/>
<dbReference type="EC" id="3.5.4.9" evidence="2"/>
<dbReference type="EMBL" id="AE005174">
    <property type="protein sequence ID" value="AAG54886.1"/>
    <property type="molecule type" value="Genomic_DNA"/>
</dbReference>
<dbReference type="EMBL" id="BA000007">
    <property type="protein sequence ID" value="BAB34014.1"/>
    <property type="molecule type" value="Genomic_DNA"/>
</dbReference>
<dbReference type="PIR" id="B85553">
    <property type="entry name" value="B85553"/>
</dbReference>
<dbReference type="PIR" id="G90702">
    <property type="entry name" value="G90702"/>
</dbReference>
<dbReference type="RefSeq" id="NP_308618.1">
    <property type="nucleotide sequence ID" value="NC_002695.1"/>
</dbReference>
<dbReference type="RefSeq" id="WP_000729155.1">
    <property type="nucleotide sequence ID" value="NZ_VOAI01000030.1"/>
</dbReference>
<dbReference type="SMR" id="Q8XCT6"/>
<dbReference type="STRING" id="155864.Z0684"/>
<dbReference type="GeneID" id="916946"/>
<dbReference type="GeneID" id="93776949"/>
<dbReference type="KEGG" id="ece:Z0684"/>
<dbReference type="KEGG" id="ecs:ECs_0591"/>
<dbReference type="PATRIC" id="fig|386585.9.peg.698"/>
<dbReference type="eggNOG" id="COG0190">
    <property type="taxonomic scope" value="Bacteria"/>
</dbReference>
<dbReference type="HOGENOM" id="CLU_034045_2_1_6"/>
<dbReference type="OMA" id="VCHILTK"/>
<dbReference type="UniPathway" id="UPA00193"/>
<dbReference type="Proteomes" id="UP000000558">
    <property type="component" value="Chromosome"/>
</dbReference>
<dbReference type="Proteomes" id="UP000002519">
    <property type="component" value="Chromosome"/>
</dbReference>
<dbReference type="GO" id="GO:0005829">
    <property type="term" value="C:cytosol"/>
    <property type="evidence" value="ECO:0007669"/>
    <property type="project" value="TreeGrafter"/>
</dbReference>
<dbReference type="GO" id="GO:0004477">
    <property type="term" value="F:methenyltetrahydrofolate cyclohydrolase activity"/>
    <property type="evidence" value="ECO:0007669"/>
    <property type="project" value="UniProtKB-UniRule"/>
</dbReference>
<dbReference type="GO" id="GO:0004488">
    <property type="term" value="F:methylenetetrahydrofolate dehydrogenase (NADP+) activity"/>
    <property type="evidence" value="ECO:0007669"/>
    <property type="project" value="UniProtKB-UniRule"/>
</dbReference>
<dbReference type="GO" id="GO:0000105">
    <property type="term" value="P:L-histidine biosynthetic process"/>
    <property type="evidence" value="ECO:0007669"/>
    <property type="project" value="UniProtKB-KW"/>
</dbReference>
<dbReference type="GO" id="GO:0009086">
    <property type="term" value="P:methionine biosynthetic process"/>
    <property type="evidence" value="ECO:0007669"/>
    <property type="project" value="UniProtKB-KW"/>
</dbReference>
<dbReference type="GO" id="GO:0006164">
    <property type="term" value="P:purine nucleotide biosynthetic process"/>
    <property type="evidence" value="ECO:0007669"/>
    <property type="project" value="UniProtKB-KW"/>
</dbReference>
<dbReference type="GO" id="GO:0035999">
    <property type="term" value="P:tetrahydrofolate interconversion"/>
    <property type="evidence" value="ECO:0007669"/>
    <property type="project" value="UniProtKB-UniRule"/>
</dbReference>
<dbReference type="CDD" id="cd01080">
    <property type="entry name" value="NAD_bind_m-THF_DH_Cyclohyd"/>
    <property type="match status" value="1"/>
</dbReference>
<dbReference type="FunFam" id="3.40.50.10860:FF:000001">
    <property type="entry name" value="Bifunctional protein FolD"/>
    <property type="match status" value="1"/>
</dbReference>
<dbReference type="FunFam" id="3.40.50.720:FF:000006">
    <property type="entry name" value="Bifunctional protein FolD"/>
    <property type="match status" value="1"/>
</dbReference>
<dbReference type="Gene3D" id="3.40.50.10860">
    <property type="entry name" value="Leucine Dehydrogenase, chain A, domain 1"/>
    <property type="match status" value="1"/>
</dbReference>
<dbReference type="Gene3D" id="3.40.50.720">
    <property type="entry name" value="NAD(P)-binding Rossmann-like Domain"/>
    <property type="match status" value="1"/>
</dbReference>
<dbReference type="HAMAP" id="MF_01576">
    <property type="entry name" value="THF_DHG_CYH"/>
    <property type="match status" value="1"/>
</dbReference>
<dbReference type="InterPro" id="IPR046346">
    <property type="entry name" value="Aminoacid_DH-like_N_sf"/>
</dbReference>
<dbReference type="InterPro" id="IPR036291">
    <property type="entry name" value="NAD(P)-bd_dom_sf"/>
</dbReference>
<dbReference type="InterPro" id="IPR000672">
    <property type="entry name" value="THF_DH/CycHdrlase"/>
</dbReference>
<dbReference type="InterPro" id="IPR020630">
    <property type="entry name" value="THF_DH/CycHdrlase_cat_dom"/>
</dbReference>
<dbReference type="InterPro" id="IPR020867">
    <property type="entry name" value="THF_DH/CycHdrlase_CS"/>
</dbReference>
<dbReference type="InterPro" id="IPR020631">
    <property type="entry name" value="THF_DH/CycHdrlase_NAD-bd_dom"/>
</dbReference>
<dbReference type="NCBIfam" id="NF008058">
    <property type="entry name" value="PRK10792.1"/>
    <property type="match status" value="1"/>
</dbReference>
<dbReference type="NCBIfam" id="NF010783">
    <property type="entry name" value="PRK14186.1"/>
    <property type="match status" value="1"/>
</dbReference>
<dbReference type="PANTHER" id="PTHR48099:SF5">
    <property type="entry name" value="C-1-TETRAHYDROFOLATE SYNTHASE, CYTOPLASMIC"/>
    <property type="match status" value="1"/>
</dbReference>
<dbReference type="PANTHER" id="PTHR48099">
    <property type="entry name" value="C-1-TETRAHYDROFOLATE SYNTHASE, CYTOPLASMIC-RELATED"/>
    <property type="match status" value="1"/>
</dbReference>
<dbReference type="Pfam" id="PF00763">
    <property type="entry name" value="THF_DHG_CYH"/>
    <property type="match status" value="1"/>
</dbReference>
<dbReference type="Pfam" id="PF02882">
    <property type="entry name" value="THF_DHG_CYH_C"/>
    <property type="match status" value="1"/>
</dbReference>
<dbReference type="PRINTS" id="PR00085">
    <property type="entry name" value="THFDHDRGNASE"/>
</dbReference>
<dbReference type="SUPFAM" id="SSF53223">
    <property type="entry name" value="Aminoacid dehydrogenase-like, N-terminal domain"/>
    <property type="match status" value="1"/>
</dbReference>
<dbReference type="SUPFAM" id="SSF51735">
    <property type="entry name" value="NAD(P)-binding Rossmann-fold domains"/>
    <property type="match status" value="1"/>
</dbReference>
<dbReference type="PROSITE" id="PS00766">
    <property type="entry name" value="THF_DHG_CYH_1"/>
    <property type="match status" value="1"/>
</dbReference>
<dbReference type="PROSITE" id="PS00767">
    <property type="entry name" value="THF_DHG_CYH_2"/>
    <property type="match status" value="1"/>
</dbReference>
<evidence type="ECO:0000250" key="1"/>
<evidence type="ECO:0000255" key="2">
    <source>
        <dbReference type="HAMAP-Rule" id="MF_01576"/>
    </source>
</evidence>